<feature type="chain" id="PRO_0000308454" description="Processive diacylglycerol beta-glucosyltransferase">
    <location>
        <begin position="1"/>
        <end position="391"/>
    </location>
</feature>
<dbReference type="EC" id="2.4.1.315"/>
<dbReference type="EMBL" id="AJ938182">
    <property type="protein sequence ID" value="CAI80571.1"/>
    <property type="molecule type" value="Genomic_DNA"/>
</dbReference>
<dbReference type="RefSeq" id="WP_000258639.1">
    <property type="nucleotide sequence ID" value="NC_007622.1"/>
</dbReference>
<dbReference type="SMR" id="Q2YWW6"/>
<dbReference type="CAZy" id="GT28">
    <property type="family name" value="Glycosyltransferase Family 28"/>
</dbReference>
<dbReference type="KEGG" id="sab:SAB0883c"/>
<dbReference type="HOGENOM" id="CLU_028367_0_1_9"/>
<dbReference type="UniPathway" id="UPA00894"/>
<dbReference type="GO" id="GO:0005886">
    <property type="term" value="C:plasma membrane"/>
    <property type="evidence" value="ECO:0007669"/>
    <property type="project" value="UniProtKB-SubCell"/>
</dbReference>
<dbReference type="GO" id="GO:0047228">
    <property type="term" value="F:1,2-diacylglycerol 3-glucosyltransferase activity"/>
    <property type="evidence" value="ECO:0007669"/>
    <property type="project" value="UniProtKB-UniRule"/>
</dbReference>
<dbReference type="GO" id="GO:0009246">
    <property type="term" value="P:enterobacterial common antigen biosynthetic process"/>
    <property type="evidence" value="ECO:0007669"/>
    <property type="project" value="UniProtKB-UniPathway"/>
</dbReference>
<dbReference type="GO" id="GO:0009247">
    <property type="term" value="P:glycolipid biosynthetic process"/>
    <property type="evidence" value="ECO:0007669"/>
    <property type="project" value="UniProtKB-UniRule"/>
</dbReference>
<dbReference type="GO" id="GO:0070395">
    <property type="term" value="P:lipoteichoic acid biosynthetic process"/>
    <property type="evidence" value="ECO:0007669"/>
    <property type="project" value="UniProtKB-UniRule"/>
</dbReference>
<dbReference type="CDD" id="cd17507">
    <property type="entry name" value="GT28_Beta-DGS-like"/>
    <property type="match status" value="1"/>
</dbReference>
<dbReference type="Gene3D" id="3.40.50.2000">
    <property type="entry name" value="Glycogen Phosphorylase B"/>
    <property type="match status" value="2"/>
</dbReference>
<dbReference type="HAMAP" id="MF_01280">
    <property type="entry name" value="Diacylglyc_glucosyltr"/>
    <property type="match status" value="1"/>
</dbReference>
<dbReference type="InterPro" id="IPR009695">
    <property type="entry name" value="Diacylglyc_glucosyltr_N"/>
</dbReference>
<dbReference type="InterPro" id="IPR007235">
    <property type="entry name" value="Glyco_trans_28_C"/>
</dbReference>
<dbReference type="InterPro" id="IPR050519">
    <property type="entry name" value="Glycosyltransf_28_UgtP"/>
</dbReference>
<dbReference type="InterPro" id="IPR023589">
    <property type="entry name" value="Pro_diacylglycrl_glcsylTrfase"/>
</dbReference>
<dbReference type="NCBIfam" id="NF010134">
    <property type="entry name" value="PRK13608.1"/>
    <property type="match status" value="1"/>
</dbReference>
<dbReference type="PANTHER" id="PTHR43025">
    <property type="entry name" value="MONOGALACTOSYLDIACYLGLYCEROL SYNTHASE"/>
    <property type="match status" value="1"/>
</dbReference>
<dbReference type="PANTHER" id="PTHR43025:SF3">
    <property type="entry name" value="MONOGALACTOSYLDIACYLGLYCEROL SYNTHASE 1, CHLOROPLASTIC"/>
    <property type="match status" value="1"/>
</dbReference>
<dbReference type="Pfam" id="PF04101">
    <property type="entry name" value="Glyco_tran_28_C"/>
    <property type="match status" value="1"/>
</dbReference>
<dbReference type="Pfam" id="PF06925">
    <property type="entry name" value="MGDG_synth"/>
    <property type="match status" value="1"/>
</dbReference>
<dbReference type="SUPFAM" id="SSF53756">
    <property type="entry name" value="UDP-Glycosyltransferase/glycogen phosphorylase"/>
    <property type="match status" value="1"/>
</dbReference>
<name>UGTP_STAAB</name>
<gene>
    <name evidence="1" type="primary">ugtP</name>
    <name type="ordered locus">SAB0883c</name>
</gene>
<organism>
    <name type="scientific">Staphylococcus aureus (strain bovine RF122 / ET3-1)</name>
    <dbReference type="NCBI Taxonomy" id="273036"/>
    <lineage>
        <taxon>Bacteria</taxon>
        <taxon>Bacillati</taxon>
        <taxon>Bacillota</taxon>
        <taxon>Bacilli</taxon>
        <taxon>Bacillales</taxon>
        <taxon>Staphylococcaceae</taxon>
        <taxon>Staphylococcus</taxon>
    </lineage>
</organism>
<evidence type="ECO:0000255" key="1">
    <source>
        <dbReference type="HAMAP-Rule" id="MF_01280"/>
    </source>
</evidence>
<accession>Q2YWW6</accession>
<sequence length="391" mass="44548">MVTQNKKILIITGSFGNGHMQVTQSIVNQLNDMNLDHLSVIEHDLFMEAHPILTSICKKWYINSFKYFRNMYKGFYYSRPDKLDKCFYKYYGLNKLINLLIKEKPDLILLTFPTPVMSVLTEQFNINIPVATVMTDYRLHKNWITPYSTRYYVATKETKKDFIDVGIDPSTVKVTGIPIDNKFETPINQKQWLIDNNLDPDKQTILMSAGAFGVSKGFDTMITDILAKSANAQVVMICGKSKELKRSLTAKFKSNENVLILGYTKHMNEWMASSQLMITKPGGITITEGFARCIPMIFLNPAPGQELENALYFEEKGFGKIADTPEEAIKIVASLTNGNEQLTNMISTMEQDKIKYATQTICRDLLDLIGHSSQPQEIYGKVPLYARFFVK</sequence>
<protein>
    <recommendedName>
        <fullName evidence="1">Processive diacylglycerol beta-glucosyltransferase</fullName>
        <ecNumber>2.4.1.315</ecNumber>
    </recommendedName>
    <alternativeName>
        <fullName evidence="1">Beta-diglucosyldiacylglycerol synthase</fullName>
        <shortName evidence="1">Beta-DGS</shortName>
        <shortName evidence="1">DGlcDAG synthase</shortName>
        <shortName evidence="1">Glc2-DAG synthase</shortName>
    </alternativeName>
    <alternativeName>
        <fullName evidence="1">Beta-gentiobiosyldiacylglycerol synthase</fullName>
    </alternativeName>
    <alternativeName>
        <fullName evidence="1">Beta-monoglucosyldiacylglycerol synthase</fullName>
        <shortName evidence="1">Beta-MGS</shortName>
        <shortName evidence="1">MGlcDAG synthase</shortName>
    </alternativeName>
    <alternativeName>
        <fullName>Diglucosyl diacylglycerol synthase (1,6-linking)</fullName>
    </alternativeName>
    <alternativeName>
        <fullName evidence="1">Glucosyl-beta-1,6-glucosyldiacylglycerol synthase</fullName>
    </alternativeName>
    <alternativeName>
        <fullName evidence="1">UDP glucosyltransferase</fullName>
    </alternativeName>
    <alternativeName>
        <fullName evidence="1">UDP-glucose:1,2-diacylglycerol-3-beta-D-glucosyltransferase</fullName>
    </alternativeName>
</protein>
<comment type="function">
    <text evidence="1">Processive glucosyltransferase involved in the biosynthesis of both the bilayer- and non-bilayer-forming membrane glucolipids. Is able to successively transfer two glucosyl residues to diacylglycerol (DAG), thereby catalyzing the formation of beta-monoglucosyl-DAG (3-O-(beta-D-glucopyranosyl)-1,2-diacyl-sn-glycerol) and beta-diglucosyl-DAG (3-O-(beta-D-glucopyranosyl-beta-(1-&gt;6)-D-glucopyranosyl)-1,2-diacyl-sn-glycerol). Beta-diglucosyl-DAG is the predominant glycolipid found in Bacillales and is also used as a membrane anchor for lipoteichoic acid (LTA).</text>
</comment>
<comment type="catalytic activity">
    <reaction>
        <text>a 1,2-diacyl-3-O-(beta-D-glucopyranosyl)-sn-glycerol + UDP-alpha-D-glucose = a 1,2-diacyl-3-O-(beta-D-Glc-(1-&gt;6)-beta-D-Glc)-sn-glycerol + UDP + H(+)</text>
        <dbReference type="Rhea" id="RHEA:39031"/>
        <dbReference type="ChEBI" id="CHEBI:15378"/>
        <dbReference type="ChEBI" id="CHEBI:58223"/>
        <dbReference type="ChEBI" id="CHEBI:58885"/>
        <dbReference type="ChEBI" id="CHEBI:75799"/>
        <dbReference type="ChEBI" id="CHEBI:76264"/>
        <dbReference type="EC" id="2.4.1.315"/>
    </reaction>
</comment>
<comment type="catalytic activity">
    <reaction evidence="1">
        <text>a 1,2-diacyl-sn-glycerol + UDP-alpha-D-glucose = a 1,2-diacyl-3-O-(beta-D-glucopyranosyl)-sn-glycerol + UDP + H(+)</text>
        <dbReference type="Rhea" id="RHEA:17285"/>
        <dbReference type="ChEBI" id="CHEBI:15378"/>
        <dbReference type="ChEBI" id="CHEBI:17815"/>
        <dbReference type="ChEBI" id="CHEBI:58223"/>
        <dbReference type="ChEBI" id="CHEBI:58885"/>
        <dbReference type="ChEBI" id="CHEBI:75799"/>
    </reaction>
</comment>
<comment type="pathway">
    <text evidence="1">Glycolipid metabolism; diglucosyl-diacylglycerol biosynthesis.</text>
</comment>
<comment type="subcellular location">
    <subcellularLocation>
        <location evidence="1">Cell membrane</location>
    </subcellularLocation>
</comment>
<comment type="similarity">
    <text evidence="1">Belongs to the glycosyltransferase 28 family. UgtP subfamily.</text>
</comment>
<proteinExistence type="inferred from homology"/>
<keyword id="KW-0119">Carbohydrate metabolism</keyword>
<keyword id="KW-1003">Cell membrane</keyword>
<keyword id="KW-0328">Glycosyltransferase</keyword>
<keyword id="KW-0444">Lipid biosynthesis</keyword>
<keyword id="KW-0443">Lipid metabolism</keyword>
<keyword id="KW-0472">Membrane</keyword>
<keyword id="KW-0808">Transferase</keyword>
<reference key="1">
    <citation type="journal article" date="2007" name="PLoS ONE">
        <title>Molecular correlates of host specialization in Staphylococcus aureus.</title>
        <authorList>
            <person name="Herron-Olson L."/>
            <person name="Fitzgerald J.R."/>
            <person name="Musser J.M."/>
            <person name="Kapur V."/>
        </authorList>
    </citation>
    <scope>NUCLEOTIDE SEQUENCE [LARGE SCALE GENOMIC DNA]</scope>
    <source>
        <strain>bovine RF122 / ET3-1</strain>
    </source>
</reference>